<dbReference type="EC" id="2.8.2.1" evidence="3"/>
<dbReference type="EMBL" id="L02331">
    <property type="status" value="NOT_ANNOTATED_CDS"/>
    <property type="molecule type" value="mRNA"/>
</dbReference>
<dbReference type="SMR" id="P52840"/>
<dbReference type="FunCoup" id="P52840">
    <property type="interactions" value="486"/>
</dbReference>
<dbReference type="STRING" id="10090.ENSMUSP00000101980"/>
<dbReference type="GlyGen" id="P52840">
    <property type="glycosylation" value="1 site, 1 O-linked glycan (1 site)"/>
</dbReference>
<dbReference type="iPTMnet" id="P52840"/>
<dbReference type="PhosphoSitePlus" id="P52840"/>
<dbReference type="SwissPalm" id="P52840"/>
<dbReference type="REPRODUCTION-2DPAGE" id="P52840"/>
<dbReference type="jPOST" id="P52840"/>
<dbReference type="PaxDb" id="10090-ENSMUSP00000101981"/>
<dbReference type="PeptideAtlas" id="P52840"/>
<dbReference type="ProteomicsDB" id="257081"/>
<dbReference type="AGR" id="MGI:102896"/>
<dbReference type="MGI" id="MGI:102896">
    <property type="gene designation" value="Sult1a1"/>
</dbReference>
<dbReference type="eggNOG" id="KOG1584">
    <property type="taxonomic scope" value="Eukaryota"/>
</dbReference>
<dbReference type="InParanoid" id="P52840"/>
<dbReference type="OrthoDB" id="205623at2759"/>
<dbReference type="PhylomeDB" id="P52840"/>
<dbReference type="Reactome" id="R-MMU-156584">
    <property type="pathway name" value="Cytosolic sulfonation of small molecules"/>
</dbReference>
<dbReference type="Reactome" id="R-MMU-9753281">
    <property type="pathway name" value="Paracetamol ADME"/>
</dbReference>
<dbReference type="ChiTaRS" id="Sult1a1">
    <property type="organism name" value="mouse"/>
</dbReference>
<dbReference type="PRO" id="PR:P52840"/>
<dbReference type="Proteomes" id="UP000000589">
    <property type="component" value="Unplaced"/>
</dbReference>
<dbReference type="RNAct" id="P52840">
    <property type="molecule type" value="protein"/>
</dbReference>
<dbReference type="GO" id="GO:0005829">
    <property type="term" value="C:cytosol"/>
    <property type="evidence" value="ECO:0000250"/>
    <property type="project" value="UniProtKB"/>
</dbReference>
<dbReference type="GO" id="GO:0050656">
    <property type="term" value="F:3'-phosphoadenosine 5'-phosphosulfate binding"/>
    <property type="evidence" value="ECO:0000250"/>
    <property type="project" value="UniProtKB"/>
</dbReference>
<dbReference type="GO" id="GO:0004062">
    <property type="term" value="F:aryl sulfotransferase activity"/>
    <property type="evidence" value="ECO:0000250"/>
    <property type="project" value="UniProtKB"/>
</dbReference>
<dbReference type="GO" id="GO:0000166">
    <property type="term" value="F:nucleotide binding"/>
    <property type="evidence" value="ECO:0000314"/>
    <property type="project" value="MGI"/>
</dbReference>
<dbReference type="GO" id="GO:0008146">
    <property type="term" value="F:sulfotransferase activity"/>
    <property type="evidence" value="ECO:0000314"/>
    <property type="project" value="MGI"/>
</dbReference>
<dbReference type="GO" id="GO:0042420">
    <property type="term" value="P:dopamine catabolic process"/>
    <property type="evidence" value="ECO:0000250"/>
    <property type="project" value="UniProtKB"/>
</dbReference>
<dbReference type="GO" id="GO:0008202">
    <property type="term" value="P:steroid metabolic process"/>
    <property type="evidence" value="ECO:0007669"/>
    <property type="project" value="UniProtKB-KW"/>
</dbReference>
<dbReference type="GO" id="GO:0051923">
    <property type="term" value="P:sulfation"/>
    <property type="evidence" value="ECO:0000314"/>
    <property type="project" value="MGI"/>
</dbReference>
<dbReference type="GO" id="GO:0042403">
    <property type="term" value="P:thyroid hormone metabolic process"/>
    <property type="evidence" value="ECO:0000250"/>
    <property type="project" value="UniProtKB"/>
</dbReference>
<dbReference type="FunFam" id="3.40.50.300:FF:000433">
    <property type="entry name" value="Estrogen sulfotransferase"/>
    <property type="match status" value="1"/>
</dbReference>
<dbReference type="Gene3D" id="3.40.50.300">
    <property type="entry name" value="P-loop containing nucleotide triphosphate hydrolases"/>
    <property type="match status" value="1"/>
</dbReference>
<dbReference type="InterPro" id="IPR027417">
    <property type="entry name" value="P-loop_NTPase"/>
</dbReference>
<dbReference type="InterPro" id="IPR000863">
    <property type="entry name" value="Sulfotransferase_dom"/>
</dbReference>
<dbReference type="PANTHER" id="PTHR11783">
    <property type="entry name" value="SULFOTRANSFERASE SULT"/>
    <property type="match status" value="1"/>
</dbReference>
<dbReference type="Pfam" id="PF00685">
    <property type="entry name" value="Sulfotransfer_1"/>
    <property type="match status" value="1"/>
</dbReference>
<dbReference type="SUPFAM" id="SSF52540">
    <property type="entry name" value="P-loop containing nucleoside triphosphate hydrolases"/>
    <property type="match status" value="1"/>
</dbReference>
<evidence type="ECO:0000250" key="1">
    <source>
        <dbReference type="UniProtKB" id="P0DMM9"/>
    </source>
</evidence>
<evidence type="ECO:0000250" key="2">
    <source>
        <dbReference type="UniProtKB" id="P17988"/>
    </source>
</evidence>
<evidence type="ECO:0000250" key="3">
    <source>
        <dbReference type="UniProtKB" id="P50225"/>
    </source>
</evidence>
<evidence type="ECO:0000269" key="4">
    <source>
    </source>
</evidence>
<evidence type="ECO:0000303" key="5">
    <source>
    </source>
</evidence>
<evidence type="ECO:0000305" key="6"/>
<proteinExistence type="evidence at protein level"/>
<comment type="function">
    <text evidence="2 3">Sulfotransferase that utilizes 3'-phospho-5'-adenylyl sulfate (PAPS) as sulfonate donor to catalyze the sulfate conjugation of a wide variety of acceptor molecules bearing a hydroxyl or an amine group. Sulfonation increases the water solubility of most compounds, and therefore their renal excretion, but it can also result in bioactivation to form active metabolites. Displays broad substrate specificity for small phenolic compounds. Plays an important role in the sulfonation of endogenous molecules such as steroid hormones (By similarity). Mediates also the metabolic activation of carcinogenic N-hydroxyarylamines leading to highly reactive intermediates capable of forming DNA adducts, potentially resulting in mutagenesis (By similarity). May play a role in gut microbiota-host metabolic interaction. O-sulfonates 4-ethylphenol (4-EP), a dietary tyrosine-derived metabolite produced by gut bacteria. The product 4-EPS crosses the blood-brain barrier and may negatively regulate oligodendrocyte maturation and myelination, affecting the functional connectivity of different brain regions associated with the limbic system. Catalyzes the sulfate conjugation of dopamine. Catalyzes the sulfation of T4 (L-thyroxine/3,5,3',5'-tetraiodothyronine), T3 (3,5,3'-triiodothyronine), rT3 (3,3',5'-triiodothyronine) and 3,3'-T2 (3,3'-diiodothyronine), with a substrate preference of 3,3'-T2 &gt; rT3 &gt; T3 &gt; T4 (By similarity).</text>
</comment>
<comment type="catalytic activity">
    <reaction evidence="3">
        <text>a phenol + 3'-phosphoadenylyl sulfate = an aryl sulfate + adenosine 3',5'-bisphosphate + H(+)</text>
        <dbReference type="Rhea" id="RHEA:12164"/>
        <dbReference type="ChEBI" id="CHEBI:15378"/>
        <dbReference type="ChEBI" id="CHEBI:33853"/>
        <dbReference type="ChEBI" id="CHEBI:58339"/>
        <dbReference type="ChEBI" id="CHEBI:58343"/>
        <dbReference type="ChEBI" id="CHEBI:140317"/>
        <dbReference type="EC" id="2.8.2.1"/>
    </reaction>
    <physiologicalReaction direction="left-to-right" evidence="3">
        <dbReference type="Rhea" id="RHEA:12165"/>
    </physiologicalReaction>
</comment>
<comment type="catalytic activity">
    <reaction evidence="3">
        <text>17beta-estradiol + 3'-phosphoadenylyl sulfate = 17beta-estradiol 3-sulfate + adenosine 3',5'-bisphosphate + H(+)</text>
        <dbReference type="Rhea" id="RHEA:52372"/>
        <dbReference type="ChEBI" id="CHEBI:15378"/>
        <dbReference type="ChEBI" id="CHEBI:16469"/>
        <dbReference type="ChEBI" id="CHEBI:58339"/>
        <dbReference type="ChEBI" id="CHEBI:58343"/>
        <dbReference type="ChEBI" id="CHEBI:136582"/>
    </reaction>
    <physiologicalReaction direction="left-to-right" evidence="3">
        <dbReference type="Rhea" id="RHEA:52373"/>
    </physiologicalReaction>
</comment>
<comment type="catalytic activity">
    <reaction evidence="3">
        <text>4-ethylphenol + 3'-phosphoadenylyl sulfate = 4-ethylphenyl sulfate + adenosine 3',5'-bisphosphate + H(+)</text>
        <dbReference type="Rhea" id="RHEA:70607"/>
        <dbReference type="ChEBI" id="CHEBI:15378"/>
        <dbReference type="ChEBI" id="CHEBI:49584"/>
        <dbReference type="ChEBI" id="CHEBI:58339"/>
        <dbReference type="ChEBI" id="CHEBI:58343"/>
        <dbReference type="ChEBI" id="CHEBI:133681"/>
    </reaction>
    <physiologicalReaction direction="left-to-right" evidence="3">
        <dbReference type="Rhea" id="RHEA:70608"/>
    </physiologicalReaction>
</comment>
<comment type="catalytic activity">
    <reaction evidence="3">
        <text>4-nitrophenol + 3'-phosphoadenylyl sulfate = 4-nitrophenyl sulfate + adenosine 3',5'-bisphosphate</text>
        <dbReference type="Rhea" id="RHEA:66548"/>
        <dbReference type="ChEBI" id="CHEBI:57917"/>
        <dbReference type="ChEBI" id="CHEBI:58339"/>
        <dbReference type="ChEBI" id="CHEBI:58343"/>
        <dbReference type="ChEBI" id="CHEBI:140994"/>
    </reaction>
    <physiologicalReaction direction="left-to-right" evidence="3">
        <dbReference type="Rhea" id="RHEA:66549"/>
    </physiologicalReaction>
</comment>
<comment type="catalytic activity">
    <reaction evidence="3">
        <text>dopamine + 3'-phosphoadenylyl sulfate = dopamine 3-O-sulfate + adenosine 3',5'-bisphosphate + H(+)</text>
        <dbReference type="Rhea" id="RHEA:67880"/>
        <dbReference type="ChEBI" id="CHEBI:15378"/>
        <dbReference type="ChEBI" id="CHEBI:58339"/>
        <dbReference type="ChEBI" id="CHEBI:58343"/>
        <dbReference type="ChEBI" id="CHEBI:59905"/>
        <dbReference type="ChEBI" id="CHEBI:133524"/>
    </reaction>
    <physiologicalReaction direction="left-to-right" evidence="3">
        <dbReference type="Rhea" id="RHEA:67881"/>
    </physiologicalReaction>
</comment>
<comment type="catalytic activity">
    <reaction evidence="3">
        <text>dopamine + 3'-phosphoadenylyl sulfate = dopamine 4-O-sulfate + adenosine 3',5'-bisphosphate + H(+)</text>
        <dbReference type="Rhea" id="RHEA:67884"/>
        <dbReference type="ChEBI" id="CHEBI:15378"/>
        <dbReference type="ChEBI" id="CHEBI:58339"/>
        <dbReference type="ChEBI" id="CHEBI:58343"/>
        <dbReference type="ChEBI" id="CHEBI:59905"/>
        <dbReference type="ChEBI" id="CHEBI:133529"/>
    </reaction>
    <physiologicalReaction direction="left-to-right" evidence="3">
        <dbReference type="Rhea" id="RHEA:67885"/>
    </physiologicalReaction>
</comment>
<comment type="catalytic activity">
    <reaction evidence="3">
        <text>3,3',5-triiodo-L-thyronine + 3'-phosphoadenylyl sulfate = 3,3',5-triiodo-L-thyronine sulfate + adenosine 3',5'-bisphosphate + H(+)</text>
        <dbReference type="Rhea" id="RHEA:67876"/>
        <dbReference type="ChEBI" id="CHEBI:15378"/>
        <dbReference type="ChEBI" id="CHEBI:58339"/>
        <dbReference type="ChEBI" id="CHEBI:58343"/>
        <dbReference type="ChEBI" id="CHEBI:176511"/>
        <dbReference type="ChEBI" id="CHEBI:533015"/>
    </reaction>
    <physiologicalReaction direction="left-to-right" evidence="3">
        <dbReference type="Rhea" id="RHEA:67877"/>
    </physiologicalReaction>
</comment>
<comment type="catalytic activity">
    <reaction evidence="3">
        <text>3,3',5'-triiodo-L-thyronine + 3'-phosphoadenylyl sulfate = 3,3',5'-triiodo-L-thyronine sulfate + adenosine 3',5'-bisphosphate + H(+)</text>
        <dbReference type="Rhea" id="RHEA:67888"/>
        <dbReference type="ChEBI" id="CHEBI:15378"/>
        <dbReference type="ChEBI" id="CHEBI:57261"/>
        <dbReference type="ChEBI" id="CHEBI:58339"/>
        <dbReference type="ChEBI" id="CHEBI:58343"/>
        <dbReference type="ChEBI" id="CHEBI:176513"/>
    </reaction>
    <physiologicalReaction direction="left-to-right" evidence="3">
        <dbReference type="Rhea" id="RHEA:67889"/>
    </physiologicalReaction>
</comment>
<comment type="catalytic activity">
    <reaction evidence="3">
        <text>3,3'-diiodo-L-thyronine + 3'-phosphoadenylyl sulfate = 3,3'-diiodo-L-thyronine sulfate + adenosine 3',5'-bisphosphate + H(+)</text>
        <dbReference type="Rhea" id="RHEA:67892"/>
        <dbReference type="ChEBI" id="CHEBI:15378"/>
        <dbReference type="ChEBI" id="CHEBI:58339"/>
        <dbReference type="ChEBI" id="CHEBI:58343"/>
        <dbReference type="ChEBI" id="CHEBI:176514"/>
        <dbReference type="ChEBI" id="CHEBI:176515"/>
    </reaction>
    <physiologicalReaction direction="left-to-right" evidence="3">
        <dbReference type="Rhea" id="RHEA:67893"/>
    </physiologicalReaction>
</comment>
<comment type="catalytic activity">
    <reaction evidence="3">
        <text>L-thyroxine + 3'-phosphoadenylyl sulfate = L-thyroxine sulfate + adenosine 3',5'-bisphosphate + H(+)</text>
        <dbReference type="Rhea" id="RHEA:83575"/>
        <dbReference type="ChEBI" id="CHEBI:15378"/>
        <dbReference type="ChEBI" id="CHEBI:58339"/>
        <dbReference type="ChEBI" id="CHEBI:58343"/>
        <dbReference type="ChEBI" id="CHEBI:58448"/>
        <dbReference type="ChEBI" id="CHEBI:176512"/>
    </reaction>
    <physiologicalReaction direction="left-to-right" evidence="3">
        <dbReference type="Rhea" id="RHEA:83576"/>
    </physiologicalReaction>
</comment>
<comment type="subunit">
    <text evidence="3">Homodimer.</text>
</comment>
<comment type="subcellular location">
    <subcellularLocation>
        <location evidence="2">Cytoplasm</location>
    </subcellularLocation>
</comment>
<comment type="tissue specificity">
    <text evidence="4">Expressed in brain, colon, liver, and small intestine of mice colonized with B.ovatus and L.plantarum.</text>
</comment>
<comment type="similarity">
    <text evidence="6">Belongs to the sulfotransferase 1 family.</text>
</comment>
<feature type="chain" id="PRO_0000085130" description="Sulfotransferase 1A1">
    <location>
        <begin position="1"/>
        <end position="291"/>
    </location>
</feature>
<feature type="active site" description="Proton acceptor" evidence="1">
    <location>
        <position position="104"/>
    </location>
</feature>
<feature type="binding site" evidence="3">
    <location>
        <begin position="44"/>
        <end position="49"/>
    </location>
    <ligand>
        <name>3'-phosphoadenylyl sulfate</name>
        <dbReference type="ChEBI" id="CHEBI:58339"/>
    </ligand>
</feature>
<feature type="binding site" evidence="3">
    <location>
        <begin position="102"/>
        <end position="104"/>
    </location>
    <ligand>
        <name>substrate</name>
    </ligand>
</feature>
<feature type="binding site" evidence="3">
    <location>
        <position position="126"/>
    </location>
    <ligand>
        <name>3'-phosphoadenylyl sulfate</name>
        <dbReference type="ChEBI" id="CHEBI:58339"/>
    </ligand>
</feature>
<feature type="binding site" evidence="3">
    <location>
        <position position="134"/>
    </location>
    <ligand>
        <name>3'-phosphoadenylyl sulfate</name>
        <dbReference type="ChEBI" id="CHEBI:58339"/>
    </ligand>
</feature>
<feature type="binding site" evidence="3">
    <location>
        <position position="189"/>
    </location>
    <ligand>
        <name>3'-phosphoadenylyl sulfate</name>
        <dbReference type="ChEBI" id="CHEBI:58339"/>
    </ligand>
</feature>
<feature type="binding site" evidence="3">
    <location>
        <begin position="223"/>
        <end position="228"/>
    </location>
    <ligand>
        <name>3'-phosphoadenylyl sulfate</name>
        <dbReference type="ChEBI" id="CHEBI:58339"/>
    </ligand>
</feature>
<feature type="binding site" evidence="3">
    <location>
        <begin position="251"/>
        <end position="255"/>
    </location>
    <ligand>
        <name>3'-phosphoadenylyl sulfate</name>
        <dbReference type="ChEBI" id="CHEBI:58339"/>
    </ligand>
</feature>
<feature type="modified residue" description="Phosphoserine" evidence="2">
    <location>
        <position position="134"/>
    </location>
</feature>
<protein>
    <recommendedName>
        <fullName>Sulfotransferase 1A1</fullName>
        <shortName>ST1A1</shortName>
        <ecNumber evidence="3">2.8.2.1</ecNumber>
    </recommendedName>
    <alternativeName>
        <fullName>Aryl sulfotransferase</fullName>
    </alternativeName>
    <alternativeName>
        <fullName>Phenol sulfotransferase</fullName>
    </alternativeName>
    <alternativeName>
        <fullName evidence="5">Phenol/aryl sulfotransferase</fullName>
        <shortName evidence="5">mSTp1</shortName>
    </alternativeName>
    <alternativeName>
        <fullName>ST1A4</fullName>
    </alternativeName>
    <alternativeName>
        <fullName>Sulfokinase</fullName>
    </alternativeName>
</protein>
<reference key="1">
    <citation type="journal article" date="1993" name="Biochim. Biophys. Acta">
        <title>Molecular cloning of cDNA encoding the phenol/aryl form of sulfotransferase (mSTp1) from mouse liver.</title>
        <authorList>
            <person name="Kong A.-N.T."/>
            <person name="Ma M."/>
            <person name="Tao D."/>
            <person name="Yang L."/>
        </authorList>
    </citation>
    <scope>NUCLEOTIDE SEQUENCE [MRNA]</scope>
    <source>
        <strain>C57BL/6 X CBA</strain>
        <tissue>Liver</tissue>
    </source>
</reference>
<reference key="2">
    <citation type="journal article" date="2010" name="Cell">
        <title>A tissue-specific atlas of mouse protein phosphorylation and expression.</title>
        <authorList>
            <person name="Huttlin E.L."/>
            <person name="Jedrychowski M.P."/>
            <person name="Elias J.E."/>
            <person name="Goswami T."/>
            <person name="Rad R."/>
            <person name="Beausoleil S.A."/>
            <person name="Villen J."/>
            <person name="Haas W."/>
            <person name="Sowa M.E."/>
            <person name="Gygi S.P."/>
        </authorList>
    </citation>
    <scope>IDENTIFICATION BY MASS SPECTROMETRY [LARGE SCALE ANALYSIS]</scope>
    <source>
        <tissue>Brown adipose tissue</tissue>
        <tissue>Liver</tissue>
        <tissue>Lung</tissue>
        <tissue>Testis</tissue>
    </source>
</reference>
<reference key="3">
    <citation type="journal article" date="2022" name="Nature">
        <title>A gut-derived metabolite alters brain activity and anxiety behaviour in mice.</title>
        <authorList>
            <person name="Needham B.D."/>
            <person name="Funabashi M."/>
            <person name="Adame M.D."/>
            <person name="Wang Z."/>
            <person name="Boktor J.C."/>
            <person name="Haney J."/>
            <person name="Wu W.L."/>
            <person name="Rabut C."/>
            <person name="Ladinsky M.S."/>
            <person name="Hwang S.J."/>
            <person name="Guo Y."/>
            <person name="Zhu Q."/>
            <person name="Griffiths J.A."/>
            <person name="Knight R."/>
            <person name="Bjorkman P.J."/>
            <person name="Shapiro M.G."/>
            <person name="Geschwind D.H."/>
            <person name="Holschneider D.P."/>
            <person name="Fischbach M.A."/>
            <person name="Mazmanian S.K."/>
        </authorList>
    </citation>
    <scope>TISSUE SPECIFICITY</scope>
</reference>
<organism>
    <name type="scientific">Mus musculus</name>
    <name type="common">Mouse</name>
    <dbReference type="NCBI Taxonomy" id="10090"/>
    <lineage>
        <taxon>Eukaryota</taxon>
        <taxon>Metazoa</taxon>
        <taxon>Chordata</taxon>
        <taxon>Craniata</taxon>
        <taxon>Vertebrata</taxon>
        <taxon>Euteleostomi</taxon>
        <taxon>Mammalia</taxon>
        <taxon>Eutheria</taxon>
        <taxon>Euarchontoglires</taxon>
        <taxon>Glires</taxon>
        <taxon>Rodentia</taxon>
        <taxon>Myomorpha</taxon>
        <taxon>Muroidea</taxon>
        <taxon>Muridae</taxon>
        <taxon>Murinae</taxon>
        <taxon>Mus</taxon>
        <taxon>Mus</taxon>
    </lineage>
</organism>
<sequence length="291" mass="33974">MEPLRKPLVPVKGIPLIKYFAETMEQLQNFTAWPDDVLISTYPKSGTNWMSEIMDMIYQGGKLDKCGRAPVYARIPFLEFSCPGVPPGLETLKETPAPRIIKTHLPLSLLPQSLLDQKIKVIYVARNAKDVVVSYYNFYKMAKLHPDPGTWESFLENFMDGKVSYGSWYQHVKEWWELRRTHPVLYLFYEDMKENPKREIKKILEFLGRSLPEETVDLIVHHTSFKKMKENPMANYTTIPTEVMDHTIYPFMRKGTIGDWKNTFTVAQSEHFDAHYAKLMTGCDFTFRCQI</sequence>
<keyword id="KW-0963">Cytoplasm</keyword>
<keyword id="KW-0443">Lipid metabolism</keyword>
<keyword id="KW-0597">Phosphoprotein</keyword>
<keyword id="KW-1185">Reference proteome</keyword>
<keyword id="KW-0753">Steroid metabolism</keyword>
<keyword id="KW-0808">Transferase</keyword>
<gene>
    <name type="primary">Sult1a1</name>
    <name type="synonym">St1a1</name>
    <name type="synonym">Stp</name>
    <name type="synonym">Stp1</name>
</gene>
<name>ST1A1_MOUSE</name>
<accession>P52840</accession>